<gene>
    <name evidence="1" type="primary">rps19</name>
</gene>
<proteinExistence type="inferred from homology"/>
<dbReference type="EMBL" id="DQ923116">
    <property type="protein sequence ID" value="ABI49820.1"/>
    <property type="molecule type" value="Genomic_DNA"/>
</dbReference>
<dbReference type="RefSeq" id="YP_740606.1">
    <property type="nucleotide sequence ID" value="NC_008335.1"/>
</dbReference>
<dbReference type="SMR" id="Q09G05"/>
<dbReference type="GeneID" id="4271281"/>
<dbReference type="GO" id="GO:0009507">
    <property type="term" value="C:chloroplast"/>
    <property type="evidence" value="ECO:0007669"/>
    <property type="project" value="UniProtKB-SubCell"/>
</dbReference>
<dbReference type="GO" id="GO:0005763">
    <property type="term" value="C:mitochondrial small ribosomal subunit"/>
    <property type="evidence" value="ECO:0007669"/>
    <property type="project" value="TreeGrafter"/>
</dbReference>
<dbReference type="GO" id="GO:0019843">
    <property type="term" value="F:rRNA binding"/>
    <property type="evidence" value="ECO:0007669"/>
    <property type="project" value="UniProtKB-UniRule"/>
</dbReference>
<dbReference type="GO" id="GO:0003735">
    <property type="term" value="F:structural constituent of ribosome"/>
    <property type="evidence" value="ECO:0007669"/>
    <property type="project" value="InterPro"/>
</dbReference>
<dbReference type="GO" id="GO:0000028">
    <property type="term" value="P:ribosomal small subunit assembly"/>
    <property type="evidence" value="ECO:0007669"/>
    <property type="project" value="TreeGrafter"/>
</dbReference>
<dbReference type="GO" id="GO:0006412">
    <property type="term" value="P:translation"/>
    <property type="evidence" value="ECO:0007669"/>
    <property type="project" value="UniProtKB-UniRule"/>
</dbReference>
<dbReference type="FunFam" id="3.30.860.10:FF:000001">
    <property type="entry name" value="30S ribosomal protein S19"/>
    <property type="match status" value="1"/>
</dbReference>
<dbReference type="Gene3D" id="3.30.860.10">
    <property type="entry name" value="30s Ribosomal Protein S19, Chain A"/>
    <property type="match status" value="1"/>
</dbReference>
<dbReference type="HAMAP" id="MF_00531">
    <property type="entry name" value="Ribosomal_uS19"/>
    <property type="match status" value="1"/>
</dbReference>
<dbReference type="InterPro" id="IPR002222">
    <property type="entry name" value="Ribosomal_uS19"/>
</dbReference>
<dbReference type="InterPro" id="IPR005732">
    <property type="entry name" value="Ribosomal_uS19_bac-type"/>
</dbReference>
<dbReference type="InterPro" id="IPR020934">
    <property type="entry name" value="Ribosomal_uS19_CS"/>
</dbReference>
<dbReference type="InterPro" id="IPR023575">
    <property type="entry name" value="Ribosomal_uS19_SF"/>
</dbReference>
<dbReference type="NCBIfam" id="TIGR01050">
    <property type="entry name" value="rpsS_bact"/>
    <property type="match status" value="1"/>
</dbReference>
<dbReference type="PANTHER" id="PTHR11880">
    <property type="entry name" value="RIBOSOMAL PROTEIN S19P FAMILY MEMBER"/>
    <property type="match status" value="1"/>
</dbReference>
<dbReference type="PANTHER" id="PTHR11880:SF8">
    <property type="entry name" value="SMALL RIBOSOMAL SUBUNIT PROTEIN US19M"/>
    <property type="match status" value="1"/>
</dbReference>
<dbReference type="Pfam" id="PF00203">
    <property type="entry name" value="Ribosomal_S19"/>
    <property type="match status" value="1"/>
</dbReference>
<dbReference type="PIRSF" id="PIRSF002144">
    <property type="entry name" value="Ribosomal_S19"/>
    <property type="match status" value="1"/>
</dbReference>
<dbReference type="PRINTS" id="PR00975">
    <property type="entry name" value="RIBOSOMALS19"/>
</dbReference>
<dbReference type="SUPFAM" id="SSF54570">
    <property type="entry name" value="Ribosomal protein S19"/>
    <property type="match status" value="1"/>
</dbReference>
<dbReference type="PROSITE" id="PS00323">
    <property type="entry name" value="RIBOSOMAL_S19"/>
    <property type="match status" value="1"/>
</dbReference>
<name>RR19_PLAOC</name>
<keyword id="KW-0150">Chloroplast</keyword>
<keyword id="KW-0934">Plastid</keyword>
<keyword id="KW-0687">Ribonucleoprotein</keyword>
<keyword id="KW-0689">Ribosomal protein</keyword>
<keyword id="KW-0694">RNA-binding</keyword>
<keyword id="KW-0699">rRNA-binding</keyword>
<comment type="function">
    <text evidence="1">Protein S19 forms a complex with S13 that binds strongly to the 16S ribosomal RNA.</text>
</comment>
<comment type="subcellular location">
    <subcellularLocation>
        <location>Plastid</location>
        <location>Chloroplast</location>
    </subcellularLocation>
</comment>
<comment type="similarity">
    <text evidence="1">Belongs to the universal ribosomal protein uS19 family.</text>
</comment>
<protein>
    <recommendedName>
        <fullName evidence="1">Small ribosomal subunit protein uS19c</fullName>
    </recommendedName>
    <alternativeName>
        <fullName evidence="2">30S ribosomal protein S19, chloroplastic</fullName>
    </alternativeName>
</protein>
<evidence type="ECO:0000255" key="1">
    <source>
        <dbReference type="HAMAP-Rule" id="MF_00531"/>
    </source>
</evidence>
<evidence type="ECO:0000305" key="2"/>
<sequence>MTRSLKKNPFVANHLLRKIEKLNTKAEKEIIVTWSRASTIIPTMIGHTIAIHNGKEHLPIYITDRMVGHKLGEFAPTMNFRGHAKNDNRSRR</sequence>
<feature type="chain" id="PRO_0000354373" description="Small ribosomal subunit protein uS19c">
    <location>
        <begin position="1"/>
        <end position="92"/>
    </location>
</feature>
<organism>
    <name type="scientific">Platanus occidentalis</name>
    <name type="common">Sycamore</name>
    <name type="synonym">American plane tree</name>
    <dbReference type="NCBI Taxonomy" id="4403"/>
    <lineage>
        <taxon>Eukaryota</taxon>
        <taxon>Viridiplantae</taxon>
        <taxon>Streptophyta</taxon>
        <taxon>Embryophyta</taxon>
        <taxon>Tracheophyta</taxon>
        <taxon>Spermatophyta</taxon>
        <taxon>Magnoliopsida</taxon>
        <taxon>Proteales</taxon>
        <taxon>Platanaceae</taxon>
        <taxon>Platanus</taxon>
    </lineage>
</organism>
<accession>Q09G05</accession>
<geneLocation type="chloroplast"/>
<reference key="1">
    <citation type="journal article" date="2006" name="BMC Plant Biol.">
        <title>Rapid and accurate pyrosequencing of angiosperm plastid genomes.</title>
        <authorList>
            <person name="Moore M.J."/>
            <person name="Dhingra A."/>
            <person name="Soltis P.S."/>
            <person name="Shaw R."/>
            <person name="Farmerie W.G."/>
            <person name="Folta K.M."/>
            <person name="Soltis D.E."/>
        </authorList>
    </citation>
    <scope>NUCLEOTIDE SEQUENCE [LARGE SCALE GENOMIC DNA]</scope>
</reference>